<reference key="1">
    <citation type="journal article" date="2013" name="Nature">
        <title>The zebrafish reference genome sequence and its relationship to the human genome.</title>
        <authorList>
            <person name="Howe K."/>
            <person name="Clark M.D."/>
            <person name="Torroja C.F."/>
            <person name="Torrance J."/>
            <person name="Berthelot C."/>
            <person name="Muffato M."/>
            <person name="Collins J.E."/>
            <person name="Humphray S."/>
            <person name="McLaren K."/>
            <person name="Matthews L."/>
            <person name="McLaren S."/>
            <person name="Sealy I."/>
            <person name="Caccamo M."/>
            <person name="Churcher C."/>
            <person name="Scott C."/>
            <person name="Barrett J.C."/>
            <person name="Koch R."/>
            <person name="Rauch G.J."/>
            <person name="White S."/>
            <person name="Chow W."/>
            <person name="Kilian B."/>
            <person name="Quintais L.T."/>
            <person name="Guerra-Assuncao J.A."/>
            <person name="Zhou Y."/>
            <person name="Gu Y."/>
            <person name="Yen J."/>
            <person name="Vogel J.H."/>
            <person name="Eyre T."/>
            <person name="Redmond S."/>
            <person name="Banerjee R."/>
            <person name="Chi J."/>
            <person name="Fu B."/>
            <person name="Langley E."/>
            <person name="Maguire S.F."/>
            <person name="Laird G.K."/>
            <person name="Lloyd D."/>
            <person name="Kenyon E."/>
            <person name="Donaldson S."/>
            <person name="Sehra H."/>
            <person name="Almeida-King J."/>
            <person name="Loveland J."/>
            <person name="Trevanion S."/>
            <person name="Jones M."/>
            <person name="Quail M."/>
            <person name="Willey D."/>
            <person name="Hunt A."/>
            <person name="Burton J."/>
            <person name="Sims S."/>
            <person name="McLay K."/>
            <person name="Plumb B."/>
            <person name="Davis J."/>
            <person name="Clee C."/>
            <person name="Oliver K."/>
            <person name="Clark R."/>
            <person name="Riddle C."/>
            <person name="Elliot D."/>
            <person name="Threadgold G."/>
            <person name="Harden G."/>
            <person name="Ware D."/>
            <person name="Begum S."/>
            <person name="Mortimore B."/>
            <person name="Kerry G."/>
            <person name="Heath P."/>
            <person name="Phillimore B."/>
            <person name="Tracey A."/>
            <person name="Corby N."/>
            <person name="Dunn M."/>
            <person name="Johnson C."/>
            <person name="Wood J."/>
            <person name="Clark S."/>
            <person name="Pelan S."/>
            <person name="Griffiths G."/>
            <person name="Smith M."/>
            <person name="Glithero R."/>
            <person name="Howden P."/>
            <person name="Barker N."/>
            <person name="Lloyd C."/>
            <person name="Stevens C."/>
            <person name="Harley J."/>
            <person name="Holt K."/>
            <person name="Panagiotidis G."/>
            <person name="Lovell J."/>
            <person name="Beasley H."/>
            <person name="Henderson C."/>
            <person name="Gordon D."/>
            <person name="Auger K."/>
            <person name="Wright D."/>
            <person name="Collins J."/>
            <person name="Raisen C."/>
            <person name="Dyer L."/>
            <person name="Leung K."/>
            <person name="Robertson L."/>
            <person name="Ambridge K."/>
            <person name="Leongamornlert D."/>
            <person name="McGuire S."/>
            <person name="Gilderthorp R."/>
            <person name="Griffiths C."/>
            <person name="Manthravadi D."/>
            <person name="Nichol S."/>
            <person name="Barker G."/>
            <person name="Whitehead S."/>
            <person name="Kay M."/>
            <person name="Brown J."/>
            <person name="Murnane C."/>
            <person name="Gray E."/>
            <person name="Humphries M."/>
            <person name="Sycamore N."/>
            <person name="Barker D."/>
            <person name="Saunders D."/>
            <person name="Wallis J."/>
            <person name="Babbage A."/>
            <person name="Hammond S."/>
            <person name="Mashreghi-Mohammadi M."/>
            <person name="Barr L."/>
            <person name="Martin S."/>
            <person name="Wray P."/>
            <person name="Ellington A."/>
            <person name="Matthews N."/>
            <person name="Ellwood M."/>
            <person name="Woodmansey R."/>
            <person name="Clark G."/>
            <person name="Cooper J."/>
            <person name="Tromans A."/>
            <person name="Grafham D."/>
            <person name="Skuce C."/>
            <person name="Pandian R."/>
            <person name="Andrews R."/>
            <person name="Harrison E."/>
            <person name="Kimberley A."/>
            <person name="Garnett J."/>
            <person name="Fosker N."/>
            <person name="Hall R."/>
            <person name="Garner P."/>
            <person name="Kelly D."/>
            <person name="Bird C."/>
            <person name="Palmer S."/>
            <person name="Gehring I."/>
            <person name="Berger A."/>
            <person name="Dooley C.M."/>
            <person name="Ersan-Urun Z."/>
            <person name="Eser C."/>
            <person name="Geiger H."/>
            <person name="Geisler M."/>
            <person name="Karotki L."/>
            <person name="Kirn A."/>
            <person name="Konantz J."/>
            <person name="Konantz M."/>
            <person name="Oberlander M."/>
            <person name="Rudolph-Geiger S."/>
            <person name="Teucke M."/>
            <person name="Lanz C."/>
            <person name="Raddatz G."/>
            <person name="Osoegawa K."/>
            <person name="Zhu B."/>
            <person name="Rapp A."/>
            <person name="Widaa S."/>
            <person name="Langford C."/>
            <person name="Yang F."/>
            <person name="Schuster S.C."/>
            <person name="Carter N.P."/>
            <person name="Harrow J."/>
            <person name="Ning Z."/>
            <person name="Herrero J."/>
            <person name="Searle S.M."/>
            <person name="Enright A."/>
            <person name="Geisler R."/>
            <person name="Plasterk R.H."/>
            <person name="Lee C."/>
            <person name="Westerfield M."/>
            <person name="de Jong P.J."/>
            <person name="Zon L.I."/>
            <person name="Postlethwait J.H."/>
            <person name="Nusslein-Volhard C."/>
            <person name="Hubbard T.J."/>
            <person name="Roest Crollius H."/>
            <person name="Rogers J."/>
            <person name="Stemple D.L."/>
        </authorList>
    </citation>
    <scope>NUCLEOTIDE SEQUENCE [LARGE SCALE GENOMIC DNA]</scope>
    <source>
        <strain>Tuebingen</strain>
    </source>
</reference>
<reference key="2">
    <citation type="submission" date="2007-03" db="EMBL/GenBank/DDBJ databases">
        <authorList>
            <consortium name="NIH - Zebrafish Gene Collection (ZGC) project"/>
        </authorList>
    </citation>
    <scope>NUCLEOTIDE SEQUENCE [LARGE SCALE MRNA]</scope>
    <source>
        <strain>WIK</strain>
        <tissue>Ovary</tissue>
    </source>
</reference>
<sequence>MGSSLVSVAEQLLKDLQRTYSEIKQIPDDLLIALRFVFGPCALQALDLVDQHSVTCVSSPSGRKAFQVLGGSGRLYTCFTSCHYCPCPAFSFTVLRRNESLMCKHLLAVILSQAMGLCQQEQVSDQQMTHILSRQPEAST</sequence>
<comment type="function">
    <text evidence="1">Involved in early stages of the homologous recombination repair (HRR) pathway of double-stranded DNA breaks arising during DNA replication or induced by DNA-damaging agents.</text>
</comment>
<comment type="subcellular location">
    <subcellularLocation>
        <location evidence="1">Nucleus</location>
    </subcellularLocation>
</comment>
<comment type="similarity">
    <text evidence="3">Belongs to the SWS1 family.</text>
</comment>
<feature type="chain" id="PRO_0000307405" description="Zinc finger SWIM domain-containing protein 7">
    <location>
        <begin position="1"/>
        <end position="140"/>
    </location>
</feature>
<feature type="zinc finger region" description="SWIM-type" evidence="2">
    <location>
        <begin position="76"/>
        <end position="114"/>
    </location>
</feature>
<feature type="sequence conflict" description="In Ref. 2; AAI33905." evidence="3" ref="2">
    <original>I</original>
    <variation>V</variation>
    <location>
        <position position="110"/>
    </location>
</feature>
<feature type="sequence conflict" description="In Ref. 2; AAI33905." evidence="3" ref="2">
    <original>A</original>
    <variation>P</variation>
    <location>
        <position position="138"/>
    </location>
</feature>
<evidence type="ECO:0000250" key="1"/>
<evidence type="ECO:0000255" key="2">
    <source>
        <dbReference type="PROSITE-ProRule" id="PRU00325"/>
    </source>
</evidence>
<evidence type="ECO:0000305" key="3"/>
<proteinExistence type="evidence at transcript level"/>
<gene>
    <name type="primary">zswim7</name>
    <name type="ORF">si:ch211-31p3.2</name>
</gene>
<organism>
    <name type="scientific">Danio rerio</name>
    <name type="common">Zebrafish</name>
    <name type="synonym">Brachydanio rerio</name>
    <dbReference type="NCBI Taxonomy" id="7955"/>
    <lineage>
        <taxon>Eukaryota</taxon>
        <taxon>Metazoa</taxon>
        <taxon>Chordata</taxon>
        <taxon>Craniata</taxon>
        <taxon>Vertebrata</taxon>
        <taxon>Euteleostomi</taxon>
        <taxon>Actinopterygii</taxon>
        <taxon>Neopterygii</taxon>
        <taxon>Teleostei</taxon>
        <taxon>Ostariophysi</taxon>
        <taxon>Cypriniformes</taxon>
        <taxon>Danionidae</taxon>
        <taxon>Danioninae</taxon>
        <taxon>Danio</taxon>
    </lineage>
</organism>
<accession>A4FVI0</accession>
<accession>A2ASQ5</accession>
<name>ZSWM7_DANRE</name>
<keyword id="KW-0227">DNA damage</keyword>
<keyword id="KW-0233">DNA recombination</keyword>
<keyword id="KW-0234">DNA repair</keyword>
<keyword id="KW-0479">Metal-binding</keyword>
<keyword id="KW-0539">Nucleus</keyword>
<keyword id="KW-1185">Reference proteome</keyword>
<keyword id="KW-0862">Zinc</keyword>
<keyword id="KW-0863">Zinc-finger</keyword>
<protein>
    <recommendedName>
        <fullName>Zinc finger SWIM domain-containing protein 7</fullName>
    </recommendedName>
</protein>
<dbReference type="EMBL" id="AL928675">
    <property type="protein sequence ID" value="CAM14449.1"/>
    <property type="molecule type" value="Genomic_DNA"/>
</dbReference>
<dbReference type="EMBL" id="BX510960">
    <property type="protein sequence ID" value="CAM14449.1"/>
    <property type="status" value="JOINED"/>
    <property type="molecule type" value="Genomic_DNA"/>
</dbReference>
<dbReference type="EMBL" id="BC133904">
    <property type="protein sequence ID" value="AAI33905.1"/>
    <property type="molecule type" value="mRNA"/>
</dbReference>
<dbReference type="RefSeq" id="NP_001077009.1">
    <property type="nucleotide sequence ID" value="NM_001083540.1"/>
</dbReference>
<dbReference type="FunCoup" id="A4FVI0">
    <property type="interactions" value="470"/>
</dbReference>
<dbReference type="STRING" id="7955.ENSDARP00000114854"/>
<dbReference type="PaxDb" id="7955-ENSDARP00000114854"/>
<dbReference type="Ensembl" id="ENSDART00000146879">
    <property type="protein sequence ID" value="ENSDARP00000114854"/>
    <property type="gene ID" value="ENSDARG00000067608"/>
</dbReference>
<dbReference type="GeneID" id="325530"/>
<dbReference type="KEGG" id="dre:325530"/>
<dbReference type="AGR" id="ZFIN:ZDB-GENE-030131-4255"/>
<dbReference type="CTD" id="125150"/>
<dbReference type="ZFIN" id="ZDB-GENE-030131-4255">
    <property type="gene designation" value="zswim7"/>
</dbReference>
<dbReference type="eggNOG" id="ENOG502RZB5">
    <property type="taxonomic scope" value="Eukaryota"/>
</dbReference>
<dbReference type="HOGENOM" id="CLU_132858_2_0_1"/>
<dbReference type="InParanoid" id="A4FVI0"/>
<dbReference type="OMA" id="YTCYTSC"/>
<dbReference type="OrthoDB" id="337581at2759"/>
<dbReference type="PhylomeDB" id="A4FVI0"/>
<dbReference type="TreeFam" id="TF339438"/>
<dbReference type="PRO" id="PR:A4FVI0"/>
<dbReference type="Proteomes" id="UP000000437">
    <property type="component" value="Chromosome 5"/>
</dbReference>
<dbReference type="Bgee" id="ENSDARG00000067608">
    <property type="expression patterns" value="Expressed in tail and 19 other cell types or tissues"/>
</dbReference>
<dbReference type="GO" id="GO:0005634">
    <property type="term" value="C:nucleus"/>
    <property type="evidence" value="ECO:0007669"/>
    <property type="project" value="UniProtKB-SubCell"/>
</dbReference>
<dbReference type="GO" id="GO:0097196">
    <property type="term" value="C:Shu complex"/>
    <property type="evidence" value="ECO:0000318"/>
    <property type="project" value="GO_Central"/>
</dbReference>
<dbReference type="GO" id="GO:0008270">
    <property type="term" value="F:zinc ion binding"/>
    <property type="evidence" value="ECO:0007669"/>
    <property type="project" value="UniProtKB-KW"/>
</dbReference>
<dbReference type="GO" id="GO:0000724">
    <property type="term" value="P:double-strand break repair via homologous recombination"/>
    <property type="evidence" value="ECO:0000250"/>
    <property type="project" value="UniProtKB"/>
</dbReference>
<dbReference type="InterPro" id="IPR007527">
    <property type="entry name" value="Znf_SWIM"/>
</dbReference>
<dbReference type="PANTHER" id="PTHR28498">
    <property type="entry name" value="ZINC FINGER SWIM DOMAIN-CONTAINING PROTEIN 7"/>
    <property type="match status" value="1"/>
</dbReference>
<dbReference type="PANTHER" id="PTHR28498:SF1">
    <property type="entry name" value="ZINC FINGER SWIM DOMAIN-CONTAINING PROTEIN 7"/>
    <property type="match status" value="1"/>
</dbReference>
<dbReference type="PROSITE" id="PS50966">
    <property type="entry name" value="ZF_SWIM"/>
    <property type="match status" value="1"/>
</dbReference>